<organism>
    <name type="scientific">Candida glabrata (strain ATCC 2001 / BCRC 20586 / JCM 3761 / NBRC 0622 / NRRL Y-65 / CBS 138)</name>
    <name type="common">Yeast</name>
    <name type="synonym">Nakaseomyces glabratus</name>
    <dbReference type="NCBI Taxonomy" id="284593"/>
    <lineage>
        <taxon>Eukaryota</taxon>
        <taxon>Fungi</taxon>
        <taxon>Dikarya</taxon>
        <taxon>Ascomycota</taxon>
        <taxon>Saccharomycotina</taxon>
        <taxon>Saccharomycetes</taxon>
        <taxon>Saccharomycetales</taxon>
        <taxon>Saccharomycetaceae</taxon>
        <taxon>Nakaseomyces</taxon>
    </lineage>
</organism>
<dbReference type="EC" id="4.2.1.36"/>
<dbReference type="EMBL" id="CR380957">
    <property type="protein sequence ID" value="CAG61656.1"/>
    <property type="molecule type" value="Genomic_DNA"/>
</dbReference>
<dbReference type="RefSeq" id="XP_448693.1">
    <property type="nucleotide sequence ID" value="XM_448693.1"/>
</dbReference>
<dbReference type="SMR" id="Q6FM51"/>
<dbReference type="FunCoup" id="Q6FM51">
    <property type="interactions" value="157"/>
</dbReference>
<dbReference type="STRING" id="284593.Q6FM51"/>
<dbReference type="EnsemblFungi" id="CAGL0K10978g-T">
    <property type="protein sequence ID" value="CAGL0K10978g-T-p1"/>
    <property type="gene ID" value="CAGL0K10978g"/>
</dbReference>
<dbReference type="KEGG" id="cgr:2890081"/>
<dbReference type="CGD" id="CAL0134839">
    <property type="gene designation" value="CAGL0K10978g"/>
</dbReference>
<dbReference type="VEuPathDB" id="FungiDB:CAGL0K10978g"/>
<dbReference type="eggNOG" id="KOG0453">
    <property type="taxonomic scope" value="Eukaryota"/>
</dbReference>
<dbReference type="HOGENOM" id="CLU_006714_3_1_1"/>
<dbReference type="InParanoid" id="Q6FM51"/>
<dbReference type="OMA" id="LCDADNI"/>
<dbReference type="UniPathway" id="UPA00033">
    <property type="reaction ID" value="UER01027"/>
</dbReference>
<dbReference type="Proteomes" id="UP000002428">
    <property type="component" value="Chromosome K"/>
</dbReference>
<dbReference type="GO" id="GO:0005759">
    <property type="term" value="C:mitochondrial matrix"/>
    <property type="evidence" value="ECO:0007669"/>
    <property type="project" value="EnsemblFungi"/>
</dbReference>
<dbReference type="GO" id="GO:0051539">
    <property type="term" value="F:4 iron, 4 sulfur cluster binding"/>
    <property type="evidence" value="ECO:0007669"/>
    <property type="project" value="InterPro"/>
</dbReference>
<dbReference type="GO" id="GO:0004409">
    <property type="term" value="F:homoaconitate hydratase activity"/>
    <property type="evidence" value="ECO:0007669"/>
    <property type="project" value="UniProtKB-EC"/>
</dbReference>
<dbReference type="GO" id="GO:0046872">
    <property type="term" value="F:metal ion binding"/>
    <property type="evidence" value="ECO:0007669"/>
    <property type="project" value="UniProtKB-KW"/>
</dbReference>
<dbReference type="GO" id="GO:0019878">
    <property type="term" value="P:lysine biosynthetic process via aminoadipic acid"/>
    <property type="evidence" value="ECO:0007669"/>
    <property type="project" value="UniProtKB-UniPathway"/>
</dbReference>
<dbReference type="CDD" id="cd01674">
    <property type="entry name" value="Homoaconitase_Swivel"/>
    <property type="match status" value="1"/>
</dbReference>
<dbReference type="FunFam" id="3.30.499.10:FF:000013">
    <property type="entry name" value="Homoaconitase, mitochondrial"/>
    <property type="match status" value="1"/>
</dbReference>
<dbReference type="FunFam" id="3.30.499.10:FF:000016">
    <property type="entry name" value="Homoaconitase, mitochondrial"/>
    <property type="match status" value="1"/>
</dbReference>
<dbReference type="Gene3D" id="3.30.499.10">
    <property type="entry name" value="Aconitase, domain 3"/>
    <property type="match status" value="2"/>
</dbReference>
<dbReference type="Gene3D" id="3.20.19.10">
    <property type="entry name" value="Aconitase, domain 4"/>
    <property type="match status" value="1"/>
</dbReference>
<dbReference type="InterPro" id="IPR015931">
    <property type="entry name" value="Acnase/IPM_dHydase_lsu_aba_1/3"/>
</dbReference>
<dbReference type="InterPro" id="IPR001030">
    <property type="entry name" value="Acoase/IPM_deHydtase_lsu_aba"/>
</dbReference>
<dbReference type="InterPro" id="IPR015928">
    <property type="entry name" value="Aconitase/3IPM_dehydase_swvl"/>
</dbReference>
<dbReference type="InterPro" id="IPR018136">
    <property type="entry name" value="Aconitase_4Fe-4S_BS"/>
</dbReference>
<dbReference type="InterPro" id="IPR036008">
    <property type="entry name" value="Aconitase_4Fe-4S_dom"/>
</dbReference>
<dbReference type="InterPro" id="IPR000573">
    <property type="entry name" value="AconitaseA/IPMdHydase_ssu_swvl"/>
</dbReference>
<dbReference type="InterPro" id="IPR004418">
    <property type="entry name" value="Homoaconitase_mito"/>
</dbReference>
<dbReference type="InterPro" id="IPR039386">
    <property type="entry name" value="Homoaconitase_swivel"/>
</dbReference>
<dbReference type="InterPro" id="IPR050067">
    <property type="entry name" value="IPM_dehydratase_rel_enz"/>
</dbReference>
<dbReference type="NCBIfam" id="TIGR00139">
    <property type="entry name" value="h_aconitase"/>
    <property type="match status" value="1"/>
</dbReference>
<dbReference type="PANTHER" id="PTHR43822:SF2">
    <property type="entry name" value="HOMOACONITASE, MITOCHONDRIAL"/>
    <property type="match status" value="1"/>
</dbReference>
<dbReference type="PANTHER" id="PTHR43822">
    <property type="entry name" value="HOMOACONITASE, MITOCHONDRIAL-RELATED"/>
    <property type="match status" value="1"/>
</dbReference>
<dbReference type="Pfam" id="PF00330">
    <property type="entry name" value="Aconitase"/>
    <property type="match status" value="1"/>
</dbReference>
<dbReference type="Pfam" id="PF00694">
    <property type="entry name" value="Aconitase_C"/>
    <property type="match status" value="1"/>
</dbReference>
<dbReference type="PRINTS" id="PR00415">
    <property type="entry name" value="ACONITASE"/>
</dbReference>
<dbReference type="SUPFAM" id="SSF53732">
    <property type="entry name" value="Aconitase iron-sulfur domain"/>
    <property type="match status" value="1"/>
</dbReference>
<dbReference type="SUPFAM" id="SSF52016">
    <property type="entry name" value="LeuD/IlvD-like"/>
    <property type="match status" value="1"/>
</dbReference>
<dbReference type="PROSITE" id="PS00450">
    <property type="entry name" value="ACONITASE_1"/>
    <property type="match status" value="1"/>
</dbReference>
<dbReference type="PROSITE" id="PS01244">
    <property type="entry name" value="ACONITASE_2"/>
    <property type="match status" value="1"/>
</dbReference>
<reference key="1">
    <citation type="journal article" date="2004" name="Nature">
        <title>Genome evolution in yeasts.</title>
        <authorList>
            <person name="Dujon B."/>
            <person name="Sherman D."/>
            <person name="Fischer G."/>
            <person name="Durrens P."/>
            <person name="Casaregola S."/>
            <person name="Lafontaine I."/>
            <person name="de Montigny J."/>
            <person name="Marck C."/>
            <person name="Neuveglise C."/>
            <person name="Talla E."/>
            <person name="Goffard N."/>
            <person name="Frangeul L."/>
            <person name="Aigle M."/>
            <person name="Anthouard V."/>
            <person name="Babour A."/>
            <person name="Barbe V."/>
            <person name="Barnay S."/>
            <person name="Blanchin S."/>
            <person name="Beckerich J.-M."/>
            <person name="Beyne E."/>
            <person name="Bleykasten C."/>
            <person name="Boisrame A."/>
            <person name="Boyer J."/>
            <person name="Cattolico L."/>
            <person name="Confanioleri F."/>
            <person name="de Daruvar A."/>
            <person name="Despons L."/>
            <person name="Fabre E."/>
            <person name="Fairhead C."/>
            <person name="Ferry-Dumazet H."/>
            <person name="Groppi A."/>
            <person name="Hantraye F."/>
            <person name="Hennequin C."/>
            <person name="Jauniaux N."/>
            <person name="Joyet P."/>
            <person name="Kachouri R."/>
            <person name="Kerrest A."/>
            <person name="Koszul R."/>
            <person name="Lemaire M."/>
            <person name="Lesur I."/>
            <person name="Ma L."/>
            <person name="Muller H."/>
            <person name="Nicaud J.-M."/>
            <person name="Nikolski M."/>
            <person name="Oztas S."/>
            <person name="Ozier-Kalogeropoulos O."/>
            <person name="Pellenz S."/>
            <person name="Potier S."/>
            <person name="Richard G.-F."/>
            <person name="Straub M.-L."/>
            <person name="Suleau A."/>
            <person name="Swennen D."/>
            <person name="Tekaia F."/>
            <person name="Wesolowski-Louvel M."/>
            <person name="Westhof E."/>
            <person name="Wirth B."/>
            <person name="Zeniou-Meyer M."/>
            <person name="Zivanovic Y."/>
            <person name="Bolotin-Fukuhara M."/>
            <person name="Thierry A."/>
            <person name="Bouchier C."/>
            <person name="Caudron B."/>
            <person name="Scarpelli C."/>
            <person name="Gaillardin C."/>
            <person name="Weissenbach J."/>
            <person name="Wincker P."/>
            <person name="Souciet J.-L."/>
        </authorList>
    </citation>
    <scope>NUCLEOTIDE SEQUENCE [LARGE SCALE GENOMIC DNA]</scope>
    <source>
        <strain>ATCC 2001 / BCRC 20586 / JCM 3761 / NBRC 0622 / NRRL Y-65 / CBS 138</strain>
    </source>
</reference>
<evidence type="ECO:0000250" key="1"/>
<evidence type="ECO:0000255" key="2"/>
<evidence type="ECO:0000305" key="3"/>
<feature type="transit peptide" description="Mitochondrion" evidence="2">
    <location>
        <begin position="1"/>
        <end position="17"/>
    </location>
</feature>
<feature type="chain" id="PRO_0000000549" description="Homoaconitase, mitochondrial">
    <location>
        <begin position="18"/>
        <end position="689"/>
    </location>
</feature>
<feature type="binding site" evidence="1">
    <location>
        <position position="336"/>
    </location>
    <ligand>
        <name>[4Fe-4S] cluster</name>
        <dbReference type="ChEBI" id="CHEBI:49883"/>
    </ligand>
</feature>
<feature type="binding site" evidence="1">
    <location>
        <position position="403"/>
    </location>
    <ligand>
        <name>[4Fe-4S] cluster</name>
        <dbReference type="ChEBI" id="CHEBI:49883"/>
    </ligand>
</feature>
<feature type="binding site" evidence="1">
    <location>
        <position position="406"/>
    </location>
    <ligand>
        <name>[4Fe-4S] cluster</name>
        <dbReference type="ChEBI" id="CHEBI:49883"/>
    </ligand>
</feature>
<accession>Q6FM51</accession>
<proteinExistence type="inferred from homology"/>
<name>LYS4_CANGA</name>
<keyword id="KW-0028">Amino-acid biosynthesis</keyword>
<keyword id="KW-0408">Iron</keyword>
<keyword id="KW-0411">Iron-sulfur</keyword>
<keyword id="KW-0456">Lyase</keyword>
<keyword id="KW-0457">Lysine biosynthesis</keyword>
<keyword id="KW-0479">Metal-binding</keyword>
<keyword id="KW-0496">Mitochondrion</keyword>
<keyword id="KW-1185">Reference proteome</keyword>
<keyword id="KW-0809">Transit peptide</keyword>
<gene>
    <name type="primary">LYS4</name>
    <name type="ordered locus">CAGL0K10978g</name>
</gene>
<protein>
    <recommendedName>
        <fullName>Homoaconitase, mitochondrial</fullName>
        <ecNumber>4.2.1.36</ecNumber>
    </recommendedName>
    <alternativeName>
        <fullName>Homoaconitate hydratase</fullName>
    </alternativeName>
</protein>
<comment type="function">
    <text evidence="1">Catalyzes the reversible hydration of cis-homoaconitate to (2R,3S)-homoisocitrate, a step in the alpha-aminoadipate pathway for lysine biosynthesis.</text>
</comment>
<comment type="catalytic activity">
    <reaction>
        <text>(2R,3S)-homoisocitrate = cis-homoaconitate + H2O</text>
        <dbReference type="Rhea" id="RHEA:15485"/>
        <dbReference type="ChEBI" id="CHEBI:15377"/>
        <dbReference type="ChEBI" id="CHEBI:15404"/>
        <dbReference type="ChEBI" id="CHEBI:58174"/>
        <dbReference type="EC" id="4.2.1.36"/>
    </reaction>
</comment>
<comment type="cofactor">
    <cofactor evidence="1">
        <name>[4Fe-4S] cluster</name>
        <dbReference type="ChEBI" id="CHEBI:49883"/>
    </cofactor>
    <text evidence="1">Binds 1 [4Fe-4S] cluster per subunit.</text>
</comment>
<comment type="pathway">
    <text>Amino-acid biosynthesis; L-lysine biosynthesis via AAA pathway; L-alpha-aminoadipate from 2-oxoglutarate: step 3/5.</text>
</comment>
<comment type="subcellular location">
    <subcellularLocation>
        <location evidence="1">Mitochondrion</location>
    </subcellularLocation>
</comment>
<comment type="similarity">
    <text evidence="3">Belongs to the aconitase/IPM isomerase family.</text>
</comment>
<sequence>MVVLRRSFHVYTRLQRGQNLTEKIVQQYSVGLAPGKRVHSGDYVSIKPAHVMSHDNSWPVALKFMNLGARTVKDPRQIVNTLDHDIQNKSDKNLTKYRNIESFAKKHGIDFYPAGRGIGHQIMVEEGYAFPLNLTVASDSHSNTYGGMGALGTPVVRTDAAAIWATGQTWWQIPPVAQVEFKGKLHESVSGKDIIVALCGVFNKDQVLNHAIEFTGDAIKHLPVDFRLTIANMTTEWGALSGLFPVDDTLINWYKNRLNIVGPNHPRINETTIKNLEDKAKVFKADSDAVYAKKLVIDLSTLTHYVSGPNSVKVSNTVQDLARDNIKINKAYLVSCTNARLSDLESAAKVVCPTGDLSKVNKVADGVEFYFAAASSEIEKEAAEKGIWQALLAAGCKPLPSGCGPCIGLGAGLLEPGEVGISATNRNFKGRMGSKDALAYLASPAVVAASAVLGRIGSPAEVWGIEDVKSSGLLAEELACNTETSTATPVSEGSAAKVEMLEGFPEEIVGELVLCDADNVNTDGIYPGKYTYQDDVSRETMAQVCMENYDGEFGSKANAGDILVSGFNFGTGSSREQAATSLLAKGINLVVAGSFSNTFSRNSINNALLTLEIPTLVEKLRSKFENAPKELTRRTGWFLKWDVPNAKVYVTEGSPDGQVLLEQKVGELGKNLQEIIIKGGLEGWVKSQL</sequence>